<name>GCSH_SALA4</name>
<feature type="chain" id="PRO_1000114543" description="Glycine cleavage system H protein">
    <location>
        <begin position="1"/>
        <end position="129"/>
    </location>
</feature>
<feature type="domain" description="Lipoyl-binding" evidence="2">
    <location>
        <begin position="24"/>
        <end position="106"/>
    </location>
</feature>
<feature type="modified residue" description="N6-lipoyllysine" evidence="1">
    <location>
        <position position="65"/>
    </location>
</feature>
<protein>
    <recommendedName>
        <fullName evidence="1">Glycine cleavage system H protein</fullName>
    </recommendedName>
</protein>
<accession>B5F5H9</accession>
<comment type="function">
    <text evidence="1">The glycine cleavage system catalyzes the degradation of glycine. The H protein shuttles the methylamine group of glycine from the P protein to the T protein.</text>
</comment>
<comment type="cofactor">
    <cofactor evidence="1">
        <name>(R)-lipoate</name>
        <dbReference type="ChEBI" id="CHEBI:83088"/>
    </cofactor>
    <text evidence="1">Binds 1 lipoyl cofactor covalently.</text>
</comment>
<comment type="subunit">
    <text evidence="1">The glycine cleavage system is composed of four proteins: P, T, L and H.</text>
</comment>
<comment type="similarity">
    <text evidence="1">Belongs to the GcvH family.</text>
</comment>
<sequence length="129" mass="13811">MSNVPAELKYSKEHEWLRKEADGTYTVGITEHAQELLGDMVFVDLPEVGATVSAGDDCAVAESVKAASDIYAPVSGEIVAVNDALSDSPELVNSEPYAGGWIFKIKASDESELESLLDATAYEALLEDE</sequence>
<dbReference type="EMBL" id="CP001138">
    <property type="protein sequence ID" value="ACH52153.1"/>
    <property type="molecule type" value="Genomic_DNA"/>
</dbReference>
<dbReference type="RefSeq" id="WP_001295377.1">
    <property type="nucleotide sequence ID" value="NC_011149.1"/>
</dbReference>
<dbReference type="SMR" id="B5F5H9"/>
<dbReference type="GeneID" id="93779098"/>
<dbReference type="KEGG" id="sea:SeAg_B3212"/>
<dbReference type="HOGENOM" id="CLU_097408_2_1_6"/>
<dbReference type="Proteomes" id="UP000008819">
    <property type="component" value="Chromosome"/>
</dbReference>
<dbReference type="GO" id="GO:0005829">
    <property type="term" value="C:cytosol"/>
    <property type="evidence" value="ECO:0007669"/>
    <property type="project" value="TreeGrafter"/>
</dbReference>
<dbReference type="GO" id="GO:0005960">
    <property type="term" value="C:glycine cleavage complex"/>
    <property type="evidence" value="ECO:0007669"/>
    <property type="project" value="InterPro"/>
</dbReference>
<dbReference type="GO" id="GO:0019464">
    <property type="term" value="P:glycine decarboxylation via glycine cleavage system"/>
    <property type="evidence" value="ECO:0007669"/>
    <property type="project" value="UniProtKB-UniRule"/>
</dbReference>
<dbReference type="CDD" id="cd06848">
    <property type="entry name" value="GCS_H"/>
    <property type="match status" value="1"/>
</dbReference>
<dbReference type="FunFam" id="2.40.50.100:FF:000011">
    <property type="entry name" value="Glycine cleavage system H protein"/>
    <property type="match status" value="1"/>
</dbReference>
<dbReference type="Gene3D" id="2.40.50.100">
    <property type="match status" value="1"/>
</dbReference>
<dbReference type="HAMAP" id="MF_00272">
    <property type="entry name" value="GcvH"/>
    <property type="match status" value="1"/>
</dbReference>
<dbReference type="InterPro" id="IPR003016">
    <property type="entry name" value="2-oxoA_DH_lipoyl-BS"/>
</dbReference>
<dbReference type="InterPro" id="IPR000089">
    <property type="entry name" value="Biotin_lipoyl"/>
</dbReference>
<dbReference type="InterPro" id="IPR002930">
    <property type="entry name" value="GCV_H"/>
</dbReference>
<dbReference type="InterPro" id="IPR033753">
    <property type="entry name" value="GCV_H/Fam206"/>
</dbReference>
<dbReference type="InterPro" id="IPR017453">
    <property type="entry name" value="GCV_H_sub"/>
</dbReference>
<dbReference type="InterPro" id="IPR011053">
    <property type="entry name" value="Single_hybrid_motif"/>
</dbReference>
<dbReference type="NCBIfam" id="TIGR00527">
    <property type="entry name" value="gcvH"/>
    <property type="match status" value="1"/>
</dbReference>
<dbReference type="NCBIfam" id="NF002270">
    <property type="entry name" value="PRK01202.1"/>
    <property type="match status" value="1"/>
</dbReference>
<dbReference type="PANTHER" id="PTHR11715">
    <property type="entry name" value="GLYCINE CLEAVAGE SYSTEM H PROTEIN"/>
    <property type="match status" value="1"/>
</dbReference>
<dbReference type="PANTHER" id="PTHR11715:SF3">
    <property type="entry name" value="GLYCINE CLEAVAGE SYSTEM H PROTEIN-RELATED"/>
    <property type="match status" value="1"/>
</dbReference>
<dbReference type="Pfam" id="PF01597">
    <property type="entry name" value="GCV_H"/>
    <property type="match status" value="1"/>
</dbReference>
<dbReference type="SUPFAM" id="SSF51230">
    <property type="entry name" value="Single hybrid motif"/>
    <property type="match status" value="1"/>
</dbReference>
<dbReference type="PROSITE" id="PS50968">
    <property type="entry name" value="BIOTINYL_LIPOYL"/>
    <property type="match status" value="1"/>
</dbReference>
<dbReference type="PROSITE" id="PS00189">
    <property type="entry name" value="LIPOYL"/>
    <property type="match status" value="1"/>
</dbReference>
<organism>
    <name type="scientific">Salmonella agona (strain SL483)</name>
    <dbReference type="NCBI Taxonomy" id="454166"/>
    <lineage>
        <taxon>Bacteria</taxon>
        <taxon>Pseudomonadati</taxon>
        <taxon>Pseudomonadota</taxon>
        <taxon>Gammaproteobacteria</taxon>
        <taxon>Enterobacterales</taxon>
        <taxon>Enterobacteriaceae</taxon>
        <taxon>Salmonella</taxon>
    </lineage>
</organism>
<reference key="1">
    <citation type="journal article" date="2011" name="J. Bacteriol.">
        <title>Comparative genomics of 28 Salmonella enterica isolates: evidence for CRISPR-mediated adaptive sublineage evolution.</title>
        <authorList>
            <person name="Fricke W.F."/>
            <person name="Mammel M.K."/>
            <person name="McDermott P.F."/>
            <person name="Tartera C."/>
            <person name="White D.G."/>
            <person name="Leclerc J.E."/>
            <person name="Ravel J."/>
            <person name="Cebula T.A."/>
        </authorList>
    </citation>
    <scope>NUCLEOTIDE SEQUENCE [LARGE SCALE GENOMIC DNA]</scope>
    <source>
        <strain>SL483</strain>
    </source>
</reference>
<gene>
    <name evidence="1" type="primary">gcvH</name>
    <name type="ordered locus">SeAg_B3212</name>
</gene>
<proteinExistence type="inferred from homology"/>
<evidence type="ECO:0000255" key="1">
    <source>
        <dbReference type="HAMAP-Rule" id="MF_00272"/>
    </source>
</evidence>
<evidence type="ECO:0000255" key="2">
    <source>
        <dbReference type="PROSITE-ProRule" id="PRU01066"/>
    </source>
</evidence>
<keyword id="KW-0450">Lipoyl</keyword>